<sequence>MQSYASAMLSVFNSDDYSPGVQQNIPALRRSSSFLCTESYNSKYQRETGENSKDSVQDRVKRPMNAFFVWSRDQRRKMALENPRMRNSEISKQLGYQWKMLTAAEKWPFFQEAQKLQAMHREKYPNYKYRPRRKANMLPKNCSLLPADPASVLCSEVQLDNRLYRDDCTKATHSTMEHQLGHLPPINAASSPQQRDRCSHWTKL</sequence>
<protein>
    <recommendedName>
        <fullName>Sex-determining region Y protein</fullName>
    </recommendedName>
    <alternativeName>
        <fullName>Testis-determining factor</fullName>
    </alternativeName>
</protein>
<accession>Q28778</accession>
<accession>A1YG13</accession>
<proteinExistence type="inferred from homology"/>
<dbReference type="EMBL" id="X86381">
    <property type="protein sequence ID" value="CAA60141.1"/>
    <property type="molecule type" value="Genomic_DNA"/>
</dbReference>
<dbReference type="EMBL" id="DQ977198">
    <property type="protein sequence ID" value="ABM54238.1"/>
    <property type="molecule type" value="Genomic_DNA"/>
</dbReference>
<dbReference type="PIR" id="S35559">
    <property type="entry name" value="S35559"/>
</dbReference>
<dbReference type="RefSeq" id="XP_063458103.1">
    <property type="nucleotide sequence ID" value="XM_063602033.1"/>
</dbReference>
<dbReference type="SMR" id="Q28778"/>
<dbReference type="GeneID" id="129395744"/>
<dbReference type="Proteomes" id="UP000240080">
    <property type="component" value="Unplaced"/>
</dbReference>
<dbReference type="GO" id="GO:0005737">
    <property type="term" value="C:cytoplasm"/>
    <property type="evidence" value="ECO:0007669"/>
    <property type="project" value="UniProtKB-SubCell"/>
</dbReference>
<dbReference type="GO" id="GO:0016607">
    <property type="term" value="C:nuclear speck"/>
    <property type="evidence" value="ECO:0007669"/>
    <property type="project" value="UniProtKB-SubCell"/>
</dbReference>
<dbReference type="GO" id="GO:0005634">
    <property type="term" value="C:nucleus"/>
    <property type="evidence" value="ECO:0000250"/>
    <property type="project" value="UniProtKB"/>
</dbReference>
<dbReference type="GO" id="GO:0005516">
    <property type="term" value="F:calmodulin binding"/>
    <property type="evidence" value="ECO:0007669"/>
    <property type="project" value="UniProtKB-KW"/>
</dbReference>
<dbReference type="GO" id="GO:0001228">
    <property type="term" value="F:DNA-binding transcription activator activity, RNA polymerase II-specific"/>
    <property type="evidence" value="ECO:0007669"/>
    <property type="project" value="TreeGrafter"/>
</dbReference>
<dbReference type="GO" id="GO:0000978">
    <property type="term" value="F:RNA polymerase II cis-regulatory region sequence-specific DNA binding"/>
    <property type="evidence" value="ECO:0007669"/>
    <property type="project" value="TreeGrafter"/>
</dbReference>
<dbReference type="GO" id="GO:0030154">
    <property type="term" value="P:cell differentiation"/>
    <property type="evidence" value="ECO:0007669"/>
    <property type="project" value="UniProtKB-KW"/>
</dbReference>
<dbReference type="GO" id="GO:0030238">
    <property type="term" value="P:male sex determination"/>
    <property type="evidence" value="ECO:0007669"/>
    <property type="project" value="InterPro"/>
</dbReference>
<dbReference type="GO" id="GO:0007548">
    <property type="term" value="P:sex differentiation"/>
    <property type="evidence" value="ECO:0007669"/>
    <property type="project" value="UniProtKB-KW"/>
</dbReference>
<dbReference type="CDD" id="cd22034">
    <property type="entry name" value="HMG-box_SoxA_SRY"/>
    <property type="match status" value="1"/>
</dbReference>
<dbReference type="FunFam" id="1.10.30.10:FF:000002">
    <property type="entry name" value="transcription factor Sox-2"/>
    <property type="match status" value="1"/>
</dbReference>
<dbReference type="Gene3D" id="1.10.30.10">
    <property type="entry name" value="High mobility group box domain"/>
    <property type="match status" value="1"/>
</dbReference>
<dbReference type="InterPro" id="IPR009071">
    <property type="entry name" value="HMG_box_dom"/>
</dbReference>
<dbReference type="InterPro" id="IPR036910">
    <property type="entry name" value="HMG_box_dom_sf"/>
</dbReference>
<dbReference type="InterPro" id="IPR017253">
    <property type="entry name" value="SRY"/>
</dbReference>
<dbReference type="InterPro" id="IPR050140">
    <property type="entry name" value="SRY-related_HMG-box_TF-like"/>
</dbReference>
<dbReference type="PANTHER" id="PTHR10270:SF161">
    <property type="entry name" value="SEX-DETERMINING REGION Y PROTEIN"/>
    <property type="match status" value="1"/>
</dbReference>
<dbReference type="PANTHER" id="PTHR10270">
    <property type="entry name" value="SOX TRANSCRIPTION FACTOR"/>
    <property type="match status" value="1"/>
</dbReference>
<dbReference type="Pfam" id="PF00505">
    <property type="entry name" value="HMG_box"/>
    <property type="match status" value="1"/>
</dbReference>
<dbReference type="PIRSF" id="PIRSF037653">
    <property type="entry name" value="SRY"/>
    <property type="match status" value="1"/>
</dbReference>
<dbReference type="SMART" id="SM00398">
    <property type="entry name" value="HMG"/>
    <property type="match status" value="1"/>
</dbReference>
<dbReference type="SUPFAM" id="SSF47095">
    <property type="entry name" value="HMG-box"/>
    <property type="match status" value="1"/>
</dbReference>
<dbReference type="PROSITE" id="PS50118">
    <property type="entry name" value="HMG_BOX_2"/>
    <property type="match status" value="1"/>
</dbReference>
<organism>
    <name type="scientific">Pan paniscus</name>
    <name type="common">Pygmy chimpanzee</name>
    <name type="synonym">Bonobo</name>
    <dbReference type="NCBI Taxonomy" id="9597"/>
    <lineage>
        <taxon>Eukaryota</taxon>
        <taxon>Metazoa</taxon>
        <taxon>Chordata</taxon>
        <taxon>Craniata</taxon>
        <taxon>Vertebrata</taxon>
        <taxon>Euteleostomi</taxon>
        <taxon>Mammalia</taxon>
        <taxon>Eutheria</taxon>
        <taxon>Euarchontoglires</taxon>
        <taxon>Primates</taxon>
        <taxon>Haplorrhini</taxon>
        <taxon>Catarrhini</taxon>
        <taxon>Hominidae</taxon>
        <taxon>Pan</taxon>
    </lineage>
</organism>
<name>SRY_PANPA</name>
<comment type="function">
    <text evidence="1 2">Transcriptional regulator that controls a genetic switch in male development. It is necessary and sufficient for initiating male sex determination by directing the development of supporting cell precursors (pre-Sertoli cells) as Sertoli rather than granulosa cells. Involved in different aspects of gene regulation including promoter activation or repression. Binds to the DNA consensus sequence 5'-[AT]AACAA[AT]-3'. SRY HMG box recognizes DNA by partial intercalation in the minor groove and promotes DNA bending. Also involved in pre-mRNA splicing (By similarity). In male adult brain involved in the maintenance of motor functions of dopaminergic neurons (By similarity).</text>
</comment>
<comment type="subunit">
    <text evidence="2">Interacts with CALM, EP300, HDAC3, KPNB1, ZNF208 isoform KRAB-O, PARP1, SLC9A3R2 and WT1. The interaction with EP300 modulates its DNA-binding activity. The interaction with KPNB1 is sensitive to dissociation by Ran in the GTP-bound form. Interaction with PARP1 impaired its DNA-binding activity.</text>
</comment>
<comment type="subcellular location">
    <subcellularLocation>
        <location evidence="2">Nucleus speckle</location>
    </subcellularLocation>
    <subcellularLocation>
        <location evidence="2">Cytoplasm</location>
    </subcellularLocation>
    <subcellularLocation>
        <location evidence="2">Nucleus</location>
    </subcellularLocation>
</comment>
<comment type="similarity">
    <text evidence="5">Belongs to the SRY family.</text>
</comment>
<comment type="online information" name="Protein Spotlight">
    <link uri="https://www.proteinspotlight.org/back_issues/080"/>
    <text>The tenuous nature of sex - Issue 80 of March 2007</text>
</comment>
<reference key="1">
    <citation type="journal article" date="1993" name="Nature">
        <title>Rapid sequence evolution of the mammalian sex-determining gene SRY.</title>
        <authorList>
            <person name="Whitfield L.S."/>
            <person name="Lovell-Badge R."/>
            <person name="Goodfellow P.N."/>
        </authorList>
    </citation>
    <scope>NUCLEOTIDE SEQUENCE [GENOMIC DNA]</scope>
</reference>
<reference key="2">
    <citation type="submission" date="2006-08" db="EMBL/GenBank/DDBJ databases">
        <title>Positive selection in transcription factor genes on the human lineage.</title>
        <authorList>
            <person name="Nickel G.C."/>
            <person name="Tefft D.L."/>
            <person name="Trevarthen K."/>
            <person name="Funt J."/>
            <person name="Adams M.D."/>
        </authorList>
    </citation>
    <scope>NUCLEOTIDE SEQUENCE [GENOMIC DNA]</scope>
</reference>
<evidence type="ECO:0000250" key="1">
    <source>
        <dbReference type="UniProtKB" id="P36394"/>
    </source>
</evidence>
<evidence type="ECO:0000250" key="2">
    <source>
        <dbReference type="UniProtKB" id="Q05066"/>
    </source>
</evidence>
<evidence type="ECO:0000255" key="3">
    <source>
        <dbReference type="PROSITE-ProRule" id="PRU00267"/>
    </source>
</evidence>
<evidence type="ECO:0000256" key="4">
    <source>
        <dbReference type="SAM" id="MobiDB-lite"/>
    </source>
</evidence>
<evidence type="ECO:0000305" key="5"/>
<keyword id="KW-0010">Activator</keyword>
<keyword id="KW-0112">Calmodulin-binding</keyword>
<keyword id="KW-0963">Cytoplasm</keyword>
<keyword id="KW-0221">Differentiation</keyword>
<keyword id="KW-0238">DNA-binding</keyword>
<keyword id="KW-0539">Nucleus</keyword>
<keyword id="KW-1185">Reference proteome</keyword>
<keyword id="KW-0726">Sexual differentiation</keyword>
<keyword id="KW-0804">Transcription</keyword>
<keyword id="KW-0805">Transcription regulation</keyword>
<gene>
    <name type="primary">SRY</name>
    <name type="synonym">TDF</name>
</gene>
<feature type="chain" id="PRO_0000048694" description="Sex-determining region Y protein">
    <location>
        <begin position="1"/>
        <end position="204"/>
    </location>
</feature>
<feature type="DNA-binding region" description="HMG box" evidence="3">
    <location>
        <begin position="60"/>
        <end position="128"/>
    </location>
</feature>
<feature type="region of interest" description="Disordered" evidence="4">
    <location>
        <begin position="175"/>
        <end position="204"/>
    </location>
</feature>
<feature type="compositionally biased region" description="Basic and acidic residues" evidence="4">
    <location>
        <begin position="194"/>
        <end position="204"/>
    </location>
</feature>